<evidence type="ECO:0000255" key="1">
    <source>
        <dbReference type="HAMAP-Rule" id="MF_00172"/>
    </source>
</evidence>
<reference key="1">
    <citation type="journal article" date="2005" name="J. Bacteriol.">
        <title>Whole-genome sequencing of Staphylococcus haemolyticus uncovers the extreme plasticity of its genome and the evolution of human-colonizing staphylococcal species.</title>
        <authorList>
            <person name="Takeuchi F."/>
            <person name="Watanabe S."/>
            <person name="Baba T."/>
            <person name="Yuzawa H."/>
            <person name="Ito T."/>
            <person name="Morimoto Y."/>
            <person name="Kuroda M."/>
            <person name="Cui L."/>
            <person name="Takahashi M."/>
            <person name="Ankai A."/>
            <person name="Baba S."/>
            <person name="Fukui S."/>
            <person name="Lee J.C."/>
            <person name="Hiramatsu K."/>
        </authorList>
    </citation>
    <scope>NUCLEOTIDE SEQUENCE [LARGE SCALE GENOMIC DNA]</scope>
    <source>
        <strain>JCSC1435</strain>
    </source>
</reference>
<gene>
    <name evidence="1" type="primary">metE</name>
    <name type="ordered locus">SH2638</name>
</gene>
<dbReference type="EC" id="2.1.1.14" evidence="1"/>
<dbReference type="EMBL" id="AP006716">
    <property type="protein sequence ID" value="BAE05947.1"/>
    <property type="molecule type" value="Genomic_DNA"/>
</dbReference>
<dbReference type="RefSeq" id="WP_011276877.1">
    <property type="nucleotide sequence ID" value="NC_007168.1"/>
</dbReference>
<dbReference type="SMR" id="Q4L330"/>
<dbReference type="GeneID" id="93781877"/>
<dbReference type="KEGG" id="sha:SH2638"/>
<dbReference type="eggNOG" id="COG0620">
    <property type="taxonomic scope" value="Bacteria"/>
</dbReference>
<dbReference type="HOGENOM" id="CLU_013175_0_0_9"/>
<dbReference type="OrthoDB" id="244285at2"/>
<dbReference type="UniPathway" id="UPA00051">
    <property type="reaction ID" value="UER00082"/>
</dbReference>
<dbReference type="Proteomes" id="UP000000543">
    <property type="component" value="Chromosome"/>
</dbReference>
<dbReference type="GO" id="GO:0003871">
    <property type="term" value="F:5-methyltetrahydropteroyltriglutamate-homocysteine S-methyltransferase activity"/>
    <property type="evidence" value="ECO:0007669"/>
    <property type="project" value="UniProtKB-UniRule"/>
</dbReference>
<dbReference type="GO" id="GO:0008270">
    <property type="term" value="F:zinc ion binding"/>
    <property type="evidence" value="ECO:0007669"/>
    <property type="project" value="InterPro"/>
</dbReference>
<dbReference type="GO" id="GO:0009086">
    <property type="term" value="P:methionine biosynthetic process"/>
    <property type="evidence" value="ECO:0007669"/>
    <property type="project" value="UniProtKB-UniRule"/>
</dbReference>
<dbReference type="GO" id="GO:0032259">
    <property type="term" value="P:methylation"/>
    <property type="evidence" value="ECO:0007669"/>
    <property type="project" value="UniProtKB-KW"/>
</dbReference>
<dbReference type="CDD" id="cd03311">
    <property type="entry name" value="CIMS_C_terminal_like"/>
    <property type="match status" value="1"/>
</dbReference>
<dbReference type="CDD" id="cd03312">
    <property type="entry name" value="CIMS_N_terminal_like"/>
    <property type="match status" value="1"/>
</dbReference>
<dbReference type="Gene3D" id="3.20.20.210">
    <property type="match status" value="2"/>
</dbReference>
<dbReference type="HAMAP" id="MF_00172">
    <property type="entry name" value="Meth_synth"/>
    <property type="match status" value="1"/>
</dbReference>
<dbReference type="InterPro" id="IPR013215">
    <property type="entry name" value="Cbl-indep_Met_Synth_N"/>
</dbReference>
<dbReference type="InterPro" id="IPR006276">
    <property type="entry name" value="Cobalamin-indep_Met_synthase"/>
</dbReference>
<dbReference type="InterPro" id="IPR002629">
    <property type="entry name" value="Met_Synth_C/arc"/>
</dbReference>
<dbReference type="InterPro" id="IPR038071">
    <property type="entry name" value="UROD/MetE-like_sf"/>
</dbReference>
<dbReference type="NCBIfam" id="TIGR01371">
    <property type="entry name" value="met_syn_B12ind"/>
    <property type="match status" value="1"/>
</dbReference>
<dbReference type="NCBIfam" id="NF003556">
    <property type="entry name" value="PRK05222.1"/>
    <property type="match status" value="1"/>
</dbReference>
<dbReference type="PANTHER" id="PTHR30519">
    <property type="entry name" value="5-METHYLTETRAHYDROPTEROYLTRIGLUTAMATE--HOMOCYSTEINE METHYLTRANSFERASE"/>
    <property type="match status" value="1"/>
</dbReference>
<dbReference type="Pfam" id="PF08267">
    <property type="entry name" value="Meth_synt_1"/>
    <property type="match status" value="1"/>
</dbReference>
<dbReference type="Pfam" id="PF01717">
    <property type="entry name" value="Meth_synt_2"/>
    <property type="match status" value="1"/>
</dbReference>
<dbReference type="PIRSF" id="PIRSF000382">
    <property type="entry name" value="MeTrfase_B12_ind"/>
    <property type="match status" value="1"/>
</dbReference>
<dbReference type="SUPFAM" id="SSF51726">
    <property type="entry name" value="UROD/MetE-like"/>
    <property type="match status" value="2"/>
</dbReference>
<keyword id="KW-0028">Amino-acid biosynthesis</keyword>
<keyword id="KW-0479">Metal-binding</keyword>
<keyword id="KW-0486">Methionine biosynthesis</keyword>
<keyword id="KW-0489">Methyltransferase</keyword>
<keyword id="KW-0677">Repeat</keyword>
<keyword id="KW-0808">Transferase</keyword>
<keyword id="KW-0862">Zinc</keyword>
<feature type="chain" id="PRO_1000017281" description="5-methyltetrahydropteroyltriglutamate--homocysteine methyltransferase">
    <location>
        <begin position="1"/>
        <end position="749"/>
    </location>
</feature>
<feature type="active site" description="Proton donor" evidence="1">
    <location>
        <position position="683"/>
    </location>
</feature>
<feature type="binding site" evidence="1">
    <location>
        <begin position="18"/>
        <end position="21"/>
    </location>
    <ligand>
        <name>5-methyltetrahydropteroyltri-L-glutamate</name>
        <dbReference type="ChEBI" id="CHEBI:58207"/>
    </ligand>
</feature>
<feature type="binding site" evidence="1">
    <location>
        <position position="112"/>
    </location>
    <ligand>
        <name>5-methyltetrahydropteroyltri-L-glutamate</name>
        <dbReference type="ChEBI" id="CHEBI:58207"/>
    </ligand>
</feature>
<feature type="binding site" evidence="1">
    <location>
        <begin position="420"/>
        <end position="422"/>
    </location>
    <ligand>
        <name>L-homocysteine</name>
        <dbReference type="ChEBI" id="CHEBI:58199"/>
    </ligand>
</feature>
<feature type="binding site" evidence="1">
    <location>
        <begin position="420"/>
        <end position="422"/>
    </location>
    <ligand>
        <name>L-methionine</name>
        <dbReference type="ChEBI" id="CHEBI:57844"/>
    </ligand>
</feature>
<feature type="binding site" evidence="1">
    <location>
        <position position="473"/>
    </location>
    <ligand>
        <name>L-homocysteine</name>
        <dbReference type="ChEBI" id="CHEBI:58199"/>
    </ligand>
</feature>
<feature type="binding site" evidence="1">
    <location>
        <position position="473"/>
    </location>
    <ligand>
        <name>L-methionine</name>
        <dbReference type="ChEBI" id="CHEBI:57844"/>
    </ligand>
</feature>
<feature type="binding site" evidence="1">
    <location>
        <position position="550"/>
    </location>
    <ligand>
        <name>5-methyltetrahydropteroyltri-L-glutamate</name>
        <dbReference type="ChEBI" id="CHEBI:58207"/>
    </ligand>
</feature>
<feature type="binding site" evidence="1">
    <location>
        <position position="588"/>
    </location>
    <ligand>
        <name>L-homocysteine</name>
        <dbReference type="ChEBI" id="CHEBI:58199"/>
    </ligand>
</feature>
<feature type="binding site" evidence="1">
    <location>
        <position position="588"/>
    </location>
    <ligand>
        <name>L-methionine</name>
        <dbReference type="ChEBI" id="CHEBI:57844"/>
    </ligand>
</feature>
<feature type="binding site" evidence="1">
    <location>
        <position position="594"/>
    </location>
    <ligand>
        <name>5-methyltetrahydropteroyltri-L-glutamate</name>
        <dbReference type="ChEBI" id="CHEBI:58207"/>
    </ligand>
</feature>
<feature type="binding site" evidence="1">
    <location>
        <position position="630"/>
    </location>
    <ligand>
        <name>Zn(2+)</name>
        <dbReference type="ChEBI" id="CHEBI:29105"/>
        <note>catalytic</note>
    </ligand>
</feature>
<feature type="binding site" evidence="1">
    <location>
        <position position="632"/>
    </location>
    <ligand>
        <name>Zn(2+)</name>
        <dbReference type="ChEBI" id="CHEBI:29105"/>
        <note>catalytic</note>
    </ligand>
</feature>
<feature type="binding site" evidence="1">
    <location>
        <position position="654"/>
    </location>
    <ligand>
        <name>Zn(2+)</name>
        <dbReference type="ChEBI" id="CHEBI:29105"/>
        <note>catalytic</note>
    </ligand>
</feature>
<feature type="binding site" evidence="1">
    <location>
        <position position="715"/>
    </location>
    <ligand>
        <name>Zn(2+)</name>
        <dbReference type="ChEBI" id="CHEBI:29105"/>
        <note>catalytic</note>
    </ligand>
</feature>
<sequence length="749" mass="85449">MTTITTSNLGFPRLGRKREWKKAIESYWAKKIDKAELDQKISDLHRENLLLQKHYNLDSVPVGDFSLYDHILDTSLLFNIIPERFQGREVNDDLLFDIARGNKEHVASALIKWFNTNYHYIVPEWDNVEPKVNHNVLLDRFNYAKSLNVNAHPVIVGPITFVKLSKGGHQSFEEKVQTLLPLYKEVLQALVDAGAEYIQVDEPVLVTDESEAYEAITREAYDYFDKAGLADKLVIQTYFERANVKFLSSLPVGGLGLDFVHDNGYNLKQIESGDFDSSKTLYAGIIDGRNVWAADIEAKKKLIETLQGHAKHIVIQPSSSLLHVPVSLDDETLEQSIEEGLSFATEKLDELDALRRLFNQNDSAKYDKLKARYERFQSQSFKNLEYDFDSVPTSRKSPFPERKKAQDARLHLPDLPTTTIGSFPQTQEVRKYRADWKNKRISDEAYNNFLESEIARWIKIQEDIGLDVLVHGEFERNDMVEFFGEKLQGFLVTKFGWVQSYGSRAVKPPVIYGDVKWTEPLTVKETVYAQSLTDKPVKGMLTGPVTILNWSFERVDVPRKVVQDQIALAIDEEVLALEEAGIKVIQVDEPALREGLPLRSEYHEQYLADAVNSFKLATSSVQDETQIHTHMCYSQFGQIIHAIHELDADVISIETSRSHGDLIKDFEDINYDLGIGLGVYDIHSPRIPTEDEIATAIDRSLQQIDRSLFWVNPDCGLKTRKEDEVKDALTVLVNTVRKKRASNNQNKPA</sequence>
<protein>
    <recommendedName>
        <fullName evidence="1">5-methyltetrahydropteroyltriglutamate--homocysteine methyltransferase</fullName>
        <ecNumber evidence="1">2.1.1.14</ecNumber>
    </recommendedName>
    <alternativeName>
        <fullName evidence="1">Cobalamin-independent methionine synthase</fullName>
    </alternativeName>
    <alternativeName>
        <fullName evidence="1">Methionine synthase, vitamin-B12 independent isozyme</fullName>
    </alternativeName>
</protein>
<comment type="function">
    <text evidence="1">Catalyzes the transfer of a methyl group from 5-methyltetrahydrofolate to homocysteine resulting in methionine formation.</text>
</comment>
<comment type="catalytic activity">
    <reaction evidence="1">
        <text>5-methyltetrahydropteroyltri-L-glutamate + L-homocysteine = tetrahydropteroyltri-L-glutamate + L-methionine</text>
        <dbReference type="Rhea" id="RHEA:21196"/>
        <dbReference type="ChEBI" id="CHEBI:57844"/>
        <dbReference type="ChEBI" id="CHEBI:58140"/>
        <dbReference type="ChEBI" id="CHEBI:58199"/>
        <dbReference type="ChEBI" id="CHEBI:58207"/>
        <dbReference type="EC" id="2.1.1.14"/>
    </reaction>
</comment>
<comment type="cofactor">
    <cofactor evidence="1">
        <name>Zn(2+)</name>
        <dbReference type="ChEBI" id="CHEBI:29105"/>
    </cofactor>
    <text evidence="1">Binds 1 zinc ion per subunit.</text>
</comment>
<comment type="pathway">
    <text evidence="1">Amino-acid biosynthesis; L-methionine biosynthesis via de novo pathway; L-methionine from L-homocysteine (MetE route): step 1/1.</text>
</comment>
<comment type="similarity">
    <text evidence="1">Belongs to the vitamin-B12 independent methionine synthase family.</text>
</comment>
<proteinExistence type="inferred from homology"/>
<organism>
    <name type="scientific">Staphylococcus haemolyticus (strain JCSC1435)</name>
    <dbReference type="NCBI Taxonomy" id="279808"/>
    <lineage>
        <taxon>Bacteria</taxon>
        <taxon>Bacillati</taxon>
        <taxon>Bacillota</taxon>
        <taxon>Bacilli</taxon>
        <taxon>Bacillales</taxon>
        <taxon>Staphylococcaceae</taxon>
        <taxon>Staphylococcus</taxon>
    </lineage>
</organism>
<name>METE_STAHJ</name>
<accession>Q4L330</accession>